<evidence type="ECO:0000255" key="1">
    <source>
        <dbReference type="HAMAP-Rule" id="MF_00198"/>
    </source>
</evidence>
<keyword id="KW-0963">Cytoplasm</keyword>
<keyword id="KW-0620">Polyamine biosynthesis</keyword>
<keyword id="KW-1185">Reference proteome</keyword>
<keyword id="KW-0745">Spermidine biosynthesis</keyword>
<keyword id="KW-0808">Transferase</keyword>
<sequence length="285" mass="31921">MTTNDTWFTEHFQTTGSAIGFRVTGKLDEVQSPFQKIEIYNSTDWGKLMVIDGALMLTSRDNFLYHEMISHPALFTHTAPKCVVIIGGGDCGTLREVLKHPDIEQVTQCDIDEQVTRMAEKHFPELCTSNNDPRATLLFSDGVAYMADCPTNSVDVIIVDSTDPVGPAKGLFNRTFYESCFRALKNDGLLIQQSESPLALLELIKEMRHEMSKAGFKAFKTLPFPQPCYPTGWWSVTLSSKQPNANFAFRQTDAQTKPFDTLYYNAHLHHGVLVPPPFIAHALGE</sequence>
<feature type="chain" id="PRO_0000156522" description="Polyamine aminopropyltransferase">
    <location>
        <begin position="1"/>
        <end position="285"/>
    </location>
</feature>
<feature type="domain" description="PABS" evidence="1">
    <location>
        <begin position="5"/>
        <end position="241"/>
    </location>
</feature>
<feature type="active site" description="Proton acceptor" evidence="1">
    <location>
        <position position="160"/>
    </location>
</feature>
<feature type="binding site" evidence="1">
    <location>
        <position position="35"/>
    </location>
    <ligand>
        <name>S-methyl-5'-thioadenosine</name>
        <dbReference type="ChEBI" id="CHEBI:17509"/>
    </ligand>
</feature>
<feature type="binding site" evidence="1">
    <location>
        <position position="66"/>
    </location>
    <ligand>
        <name>spermidine</name>
        <dbReference type="ChEBI" id="CHEBI:57834"/>
    </ligand>
</feature>
<feature type="binding site" evidence="1">
    <location>
        <position position="90"/>
    </location>
    <ligand>
        <name>spermidine</name>
        <dbReference type="ChEBI" id="CHEBI:57834"/>
    </ligand>
</feature>
<feature type="binding site" evidence="1">
    <location>
        <position position="110"/>
    </location>
    <ligand>
        <name>S-methyl-5'-thioadenosine</name>
        <dbReference type="ChEBI" id="CHEBI:17509"/>
    </ligand>
</feature>
<feature type="binding site" evidence="1">
    <location>
        <begin position="141"/>
        <end position="142"/>
    </location>
    <ligand>
        <name>S-methyl-5'-thioadenosine</name>
        <dbReference type="ChEBI" id="CHEBI:17509"/>
    </ligand>
</feature>
<feature type="binding site" evidence="1">
    <location>
        <begin position="160"/>
        <end position="163"/>
    </location>
    <ligand>
        <name>spermidine</name>
        <dbReference type="ChEBI" id="CHEBI:57834"/>
    </ligand>
</feature>
<feature type="binding site" evidence="1">
    <location>
        <position position="167"/>
    </location>
    <ligand>
        <name>S-methyl-5'-thioadenosine</name>
        <dbReference type="ChEBI" id="CHEBI:17509"/>
    </ligand>
</feature>
<comment type="function">
    <text evidence="1">Catalyzes the irreversible transfer of a propylamine group from the amino donor S-adenosylmethioninamine (decarboxy-AdoMet) to putrescine (1,4-diaminobutane) to yield spermidine.</text>
</comment>
<comment type="catalytic activity">
    <reaction evidence="1">
        <text>S-adenosyl 3-(methylsulfanyl)propylamine + putrescine = S-methyl-5'-thioadenosine + spermidine + H(+)</text>
        <dbReference type="Rhea" id="RHEA:12721"/>
        <dbReference type="ChEBI" id="CHEBI:15378"/>
        <dbReference type="ChEBI" id="CHEBI:17509"/>
        <dbReference type="ChEBI" id="CHEBI:57443"/>
        <dbReference type="ChEBI" id="CHEBI:57834"/>
        <dbReference type="ChEBI" id="CHEBI:326268"/>
        <dbReference type="EC" id="2.5.1.16"/>
    </reaction>
</comment>
<comment type="pathway">
    <text evidence="1">Amine and polyamine biosynthesis; spermidine biosynthesis; spermidine from putrescine: step 1/1.</text>
</comment>
<comment type="subunit">
    <text evidence="1">Homodimer or homotetramer.</text>
</comment>
<comment type="subcellular location">
    <subcellularLocation>
        <location evidence="1">Cytoplasm</location>
    </subcellularLocation>
</comment>
<comment type="similarity">
    <text evidence="1">Belongs to the spermidine/spermine synthase family.</text>
</comment>
<organism>
    <name type="scientific">Xylella fastidiosa (strain Temecula1 / ATCC 700964)</name>
    <dbReference type="NCBI Taxonomy" id="183190"/>
    <lineage>
        <taxon>Bacteria</taxon>
        <taxon>Pseudomonadati</taxon>
        <taxon>Pseudomonadota</taxon>
        <taxon>Gammaproteobacteria</taxon>
        <taxon>Lysobacterales</taxon>
        <taxon>Lysobacteraceae</taxon>
        <taxon>Xylella</taxon>
    </lineage>
</organism>
<dbReference type="EC" id="2.5.1.16" evidence="1"/>
<dbReference type="EMBL" id="AE009442">
    <property type="protein sequence ID" value="AAO28011.1"/>
    <property type="molecule type" value="Genomic_DNA"/>
</dbReference>
<dbReference type="RefSeq" id="WP_004087589.1">
    <property type="nucleotide sequence ID" value="NC_004556.1"/>
</dbReference>
<dbReference type="SMR" id="Q87F26"/>
<dbReference type="GeneID" id="93903803"/>
<dbReference type="KEGG" id="xft:PD_0112"/>
<dbReference type="HOGENOM" id="CLU_048199_0_0_6"/>
<dbReference type="UniPathway" id="UPA00248">
    <property type="reaction ID" value="UER00314"/>
</dbReference>
<dbReference type="Proteomes" id="UP000002516">
    <property type="component" value="Chromosome"/>
</dbReference>
<dbReference type="GO" id="GO:0005829">
    <property type="term" value="C:cytosol"/>
    <property type="evidence" value="ECO:0007669"/>
    <property type="project" value="TreeGrafter"/>
</dbReference>
<dbReference type="GO" id="GO:0004766">
    <property type="term" value="F:spermidine synthase activity"/>
    <property type="evidence" value="ECO:0007669"/>
    <property type="project" value="UniProtKB-UniRule"/>
</dbReference>
<dbReference type="GO" id="GO:0008295">
    <property type="term" value="P:spermidine biosynthetic process"/>
    <property type="evidence" value="ECO:0007669"/>
    <property type="project" value="UniProtKB-UniRule"/>
</dbReference>
<dbReference type="CDD" id="cd02440">
    <property type="entry name" value="AdoMet_MTases"/>
    <property type="match status" value="1"/>
</dbReference>
<dbReference type="Gene3D" id="2.30.140.10">
    <property type="entry name" value="Spermidine synthase, tetramerisation domain"/>
    <property type="match status" value="1"/>
</dbReference>
<dbReference type="Gene3D" id="3.40.50.150">
    <property type="entry name" value="Vaccinia Virus protein VP39"/>
    <property type="match status" value="1"/>
</dbReference>
<dbReference type="HAMAP" id="MF_00198">
    <property type="entry name" value="Spermidine_synth"/>
    <property type="match status" value="1"/>
</dbReference>
<dbReference type="InterPro" id="IPR030374">
    <property type="entry name" value="PABS"/>
</dbReference>
<dbReference type="InterPro" id="IPR030373">
    <property type="entry name" value="PABS_CS"/>
</dbReference>
<dbReference type="InterPro" id="IPR029063">
    <property type="entry name" value="SAM-dependent_MTases_sf"/>
</dbReference>
<dbReference type="InterPro" id="IPR001045">
    <property type="entry name" value="Spermi_synthase"/>
</dbReference>
<dbReference type="InterPro" id="IPR035246">
    <property type="entry name" value="Spermidine_synt_N"/>
</dbReference>
<dbReference type="InterPro" id="IPR037163">
    <property type="entry name" value="Spermidine_synt_N_sf"/>
</dbReference>
<dbReference type="NCBIfam" id="NF002010">
    <property type="entry name" value="PRK00811.1"/>
    <property type="match status" value="1"/>
</dbReference>
<dbReference type="NCBIfam" id="TIGR00417">
    <property type="entry name" value="speE"/>
    <property type="match status" value="1"/>
</dbReference>
<dbReference type="PANTHER" id="PTHR11558:SF11">
    <property type="entry name" value="SPERMIDINE SYNTHASE"/>
    <property type="match status" value="1"/>
</dbReference>
<dbReference type="PANTHER" id="PTHR11558">
    <property type="entry name" value="SPERMIDINE/SPERMINE SYNTHASE"/>
    <property type="match status" value="1"/>
</dbReference>
<dbReference type="Pfam" id="PF17284">
    <property type="entry name" value="Spermine_synt_N"/>
    <property type="match status" value="1"/>
</dbReference>
<dbReference type="Pfam" id="PF01564">
    <property type="entry name" value="Spermine_synth"/>
    <property type="match status" value="1"/>
</dbReference>
<dbReference type="SUPFAM" id="SSF53335">
    <property type="entry name" value="S-adenosyl-L-methionine-dependent methyltransferases"/>
    <property type="match status" value="1"/>
</dbReference>
<dbReference type="PROSITE" id="PS01330">
    <property type="entry name" value="PABS_1"/>
    <property type="match status" value="1"/>
</dbReference>
<dbReference type="PROSITE" id="PS51006">
    <property type="entry name" value="PABS_2"/>
    <property type="match status" value="1"/>
</dbReference>
<proteinExistence type="inferred from homology"/>
<protein>
    <recommendedName>
        <fullName evidence="1">Polyamine aminopropyltransferase</fullName>
    </recommendedName>
    <alternativeName>
        <fullName evidence="1">Putrescine aminopropyltransferase</fullName>
        <shortName evidence="1">PAPT</shortName>
    </alternativeName>
    <alternativeName>
        <fullName evidence="1">Spermidine synthase</fullName>
        <shortName evidence="1">SPDS</shortName>
        <shortName evidence="1">SPDSY</shortName>
        <ecNumber evidence="1">2.5.1.16</ecNumber>
    </alternativeName>
</protein>
<accession>Q87F26</accession>
<name>SPEE_XYLFT</name>
<reference key="1">
    <citation type="journal article" date="2003" name="J. Bacteriol.">
        <title>Comparative analyses of the complete genome sequences of Pierce's disease and citrus variegated chlorosis strains of Xylella fastidiosa.</title>
        <authorList>
            <person name="Van Sluys M.A."/>
            <person name="de Oliveira M.C."/>
            <person name="Monteiro-Vitorello C.B."/>
            <person name="Miyaki C.Y."/>
            <person name="Furlan L.R."/>
            <person name="Camargo L.E.A."/>
            <person name="da Silva A.C.R."/>
            <person name="Moon D.H."/>
            <person name="Takita M.A."/>
            <person name="Lemos E.G.M."/>
            <person name="Machado M.A."/>
            <person name="Ferro M.I.T."/>
            <person name="da Silva F.R."/>
            <person name="Goldman M.H.S."/>
            <person name="Goldman G.H."/>
            <person name="Lemos M.V.F."/>
            <person name="El-Dorry H."/>
            <person name="Tsai S.M."/>
            <person name="Carrer H."/>
            <person name="Carraro D.M."/>
            <person name="de Oliveira R.C."/>
            <person name="Nunes L.R."/>
            <person name="Siqueira W.J."/>
            <person name="Coutinho L.L."/>
            <person name="Kimura E.T."/>
            <person name="Ferro E.S."/>
            <person name="Harakava R."/>
            <person name="Kuramae E.E."/>
            <person name="Marino C.L."/>
            <person name="Giglioti E."/>
            <person name="Abreu I.L."/>
            <person name="Alves L.M.C."/>
            <person name="do Amaral A.M."/>
            <person name="Baia G.S."/>
            <person name="Blanco S.R."/>
            <person name="Brito M.S."/>
            <person name="Cannavan F.S."/>
            <person name="Celestino A.V."/>
            <person name="da Cunha A.F."/>
            <person name="Fenille R.C."/>
            <person name="Ferro J.A."/>
            <person name="Formighieri E.F."/>
            <person name="Kishi L.T."/>
            <person name="Leoni S.G."/>
            <person name="Oliveira A.R."/>
            <person name="Rosa V.E. Jr."/>
            <person name="Sassaki F.T."/>
            <person name="Sena J.A.D."/>
            <person name="de Souza A.A."/>
            <person name="Truffi D."/>
            <person name="Tsukumo F."/>
            <person name="Yanai G.M."/>
            <person name="Zaros L.G."/>
            <person name="Civerolo E.L."/>
            <person name="Simpson A.J.G."/>
            <person name="Almeida N.F. Jr."/>
            <person name="Setubal J.C."/>
            <person name="Kitajima J.P."/>
        </authorList>
    </citation>
    <scope>NUCLEOTIDE SEQUENCE [LARGE SCALE GENOMIC DNA]</scope>
    <source>
        <strain>Temecula1 / ATCC 700964</strain>
    </source>
</reference>
<gene>
    <name evidence="1" type="primary">speE</name>
    <name type="ordered locus">PD_0112</name>
</gene>